<accession>Q9VVL6</accession>
<gene>
    <name type="primary">MED19</name>
    <name type="ORF">CG5546</name>
</gene>
<name>MED19_DROME</name>
<evidence type="ECO:0000250" key="1"/>
<evidence type="ECO:0000255" key="2"/>
<evidence type="ECO:0000256" key="3">
    <source>
        <dbReference type="SAM" id="MobiDB-lite"/>
    </source>
</evidence>
<evidence type="ECO:0000305" key="4"/>
<keyword id="KW-0010">Activator</keyword>
<keyword id="KW-0175">Coiled coil</keyword>
<keyword id="KW-0539">Nucleus</keyword>
<keyword id="KW-1185">Reference proteome</keyword>
<keyword id="KW-0804">Transcription</keyword>
<keyword id="KW-0805">Transcription regulation</keyword>
<dbReference type="EMBL" id="AE014296">
    <property type="protein sequence ID" value="AAF49295.1"/>
    <property type="molecule type" value="Genomic_DNA"/>
</dbReference>
<dbReference type="EMBL" id="AY069647">
    <property type="protein sequence ID" value="AAL39792.1"/>
    <property type="molecule type" value="mRNA"/>
</dbReference>
<dbReference type="RefSeq" id="NP_001287103.1">
    <property type="nucleotide sequence ID" value="NM_001300174.1"/>
</dbReference>
<dbReference type="RefSeq" id="NP_649016.1">
    <property type="nucleotide sequence ID" value="NM_140759.3"/>
</dbReference>
<dbReference type="BioGRID" id="65272">
    <property type="interactions" value="39"/>
</dbReference>
<dbReference type="ComplexPortal" id="CPX-2308">
    <property type="entry name" value="Core mediator complex"/>
</dbReference>
<dbReference type="FunCoup" id="Q9VVL6">
    <property type="interactions" value="266"/>
</dbReference>
<dbReference type="IntAct" id="Q9VVL6">
    <property type="interactions" value="43"/>
</dbReference>
<dbReference type="STRING" id="7227.FBpp0311801"/>
<dbReference type="GlyGen" id="Q9VVL6">
    <property type="glycosylation" value="1 site"/>
</dbReference>
<dbReference type="PaxDb" id="7227-FBpp0074926"/>
<dbReference type="DNASU" id="39987"/>
<dbReference type="EnsemblMetazoa" id="FBtr0075160">
    <property type="protein sequence ID" value="FBpp0074926"/>
    <property type="gene ID" value="FBgn0036761"/>
</dbReference>
<dbReference type="EnsemblMetazoa" id="FBtr0345815">
    <property type="protein sequence ID" value="FBpp0311801"/>
    <property type="gene ID" value="FBgn0036761"/>
</dbReference>
<dbReference type="GeneID" id="39987"/>
<dbReference type="KEGG" id="dme:Dmel_CG5546"/>
<dbReference type="AGR" id="FB:FBgn0036761"/>
<dbReference type="CTD" id="219541"/>
<dbReference type="FlyBase" id="FBgn0036761">
    <property type="gene designation" value="MED19"/>
</dbReference>
<dbReference type="VEuPathDB" id="VectorBase:FBgn0036761"/>
<dbReference type="eggNOG" id="KOG4043">
    <property type="taxonomic scope" value="Eukaryota"/>
</dbReference>
<dbReference type="HOGENOM" id="CLU_829689_0_0_1"/>
<dbReference type="InParanoid" id="Q9VVL6"/>
<dbReference type="OMA" id="AGMSNPM"/>
<dbReference type="OrthoDB" id="10044050at2759"/>
<dbReference type="PhylomeDB" id="Q9VVL6"/>
<dbReference type="BioGRID-ORCS" id="39987">
    <property type="hits" value="0 hits in 1 CRISPR screen"/>
</dbReference>
<dbReference type="ChiTaRS" id="MED19">
    <property type="organism name" value="fly"/>
</dbReference>
<dbReference type="GenomeRNAi" id="39987"/>
<dbReference type="PRO" id="PR:Q9VVL6"/>
<dbReference type="Proteomes" id="UP000000803">
    <property type="component" value="Chromosome 3L"/>
</dbReference>
<dbReference type="Bgee" id="FBgn0036761">
    <property type="expression patterns" value="Expressed in spermatocyte in testis and 216 other cell types or tissues"/>
</dbReference>
<dbReference type="ExpressionAtlas" id="Q9VVL6">
    <property type="expression patterns" value="baseline and differential"/>
</dbReference>
<dbReference type="GO" id="GO:0016592">
    <property type="term" value="C:mediator complex"/>
    <property type="evidence" value="ECO:0000250"/>
    <property type="project" value="UniProtKB"/>
</dbReference>
<dbReference type="GO" id="GO:0140297">
    <property type="term" value="F:DNA-binding transcription factor binding"/>
    <property type="evidence" value="ECO:0000353"/>
    <property type="project" value="FlyBase"/>
</dbReference>
<dbReference type="GO" id="GO:0003712">
    <property type="term" value="F:transcription coregulator activity"/>
    <property type="evidence" value="ECO:0000250"/>
    <property type="project" value="UniProtKB"/>
</dbReference>
<dbReference type="GO" id="GO:0045944">
    <property type="term" value="P:positive regulation of transcription by RNA polymerase II"/>
    <property type="evidence" value="ECO:0000315"/>
    <property type="project" value="FlyBase"/>
</dbReference>
<dbReference type="GO" id="GO:0006357">
    <property type="term" value="P:regulation of transcription by RNA polymerase II"/>
    <property type="evidence" value="ECO:0000250"/>
    <property type="project" value="UniProtKB"/>
</dbReference>
<dbReference type="InterPro" id="IPR019403">
    <property type="entry name" value="Mediator_Med19_met"/>
</dbReference>
<dbReference type="PANTHER" id="PTHR22536">
    <property type="entry name" value="LUNG CANCER METASTASIS-RELATED LCMR1 PROTEIN"/>
    <property type="match status" value="1"/>
</dbReference>
<dbReference type="PANTHER" id="PTHR22536:SF1">
    <property type="entry name" value="MEDIATOR OF RNA POLYMERASE II TRANSCRIPTION SUBUNIT 19"/>
    <property type="match status" value="1"/>
</dbReference>
<dbReference type="Pfam" id="PF10278">
    <property type="entry name" value="Med19"/>
    <property type="match status" value="1"/>
</dbReference>
<feature type="chain" id="PRO_0000304773" description="Mediator of RNA polymerase II transcription subunit 19">
    <location>
        <begin position="1"/>
        <end position="337"/>
    </location>
</feature>
<feature type="region of interest" description="Disordered" evidence="3">
    <location>
        <begin position="1"/>
        <end position="38"/>
    </location>
</feature>
<feature type="region of interest" description="Disordered" evidence="3">
    <location>
        <begin position="155"/>
        <end position="234"/>
    </location>
</feature>
<feature type="region of interest" description="Disordered" evidence="3">
    <location>
        <begin position="297"/>
        <end position="337"/>
    </location>
</feature>
<feature type="coiled-coil region" evidence="2">
    <location>
        <begin position="189"/>
        <end position="223"/>
    </location>
</feature>
<feature type="compositionally biased region" description="Polar residues" evidence="3">
    <location>
        <begin position="28"/>
        <end position="38"/>
    </location>
</feature>
<feature type="compositionally biased region" description="Basic residues" evidence="3">
    <location>
        <begin position="159"/>
        <end position="171"/>
    </location>
</feature>
<feature type="compositionally biased region" description="Basic residues" evidence="3">
    <location>
        <begin position="208"/>
        <end position="221"/>
    </location>
</feature>
<feature type="compositionally biased region" description="Low complexity" evidence="3">
    <location>
        <begin position="297"/>
        <end position="309"/>
    </location>
</feature>
<feature type="compositionally biased region" description="Gly residues" evidence="3">
    <location>
        <begin position="310"/>
        <end position="330"/>
    </location>
</feature>
<proteinExistence type="evidence at protein level"/>
<reference key="1">
    <citation type="journal article" date="2000" name="Science">
        <title>The genome sequence of Drosophila melanogaster.</title>
        <authorList>
            <person name="Adams M.D."/>
            <person name="Celniker S.E."/>
            <person name="Holt R.A."/>
            <person name="Evans C.A."/>
            <person name="Gocayne J.D."/>
            <person name="Amanatides P.G."/>
            <person name="Scherer S.E."/>
            <person name="Li P.W."/>
            <person name="Hoskins R.A."/>
            <person name="Galle R.F."/>
            <person name="George R.A."/>
            <person name="Lewis S.E."/>
            <person name="Richards S."/>
            <person name="Ashburner M."/>
            <person name="Henderson S.N."/>
            <person name="Sutton G.G."/>
            <person name="Wortman J.R."/>
            <person name="Yandell M.D."/>
            <person name="Zhang Q."/>
            <person name="Chen L.X."/>
            <person name="Brandon R.C."/>
            <person name="Rogers Y.-H.C."/>
            <person name="Blazej R.G."/>
            <person name="Champe M."/>
            <person name="Pfeiffer B.D."/>
            <person name="Wan K.H."/>
            <person name="Doyle C."/>
            <person name="Baxter E.G."/>
            <person name="Helt G."/>
            <person name="Nelson C.R."/>
            <person name="Miklos G.L.G."/>
            <person name="Abril J.F."/>
            <person name="Agbayani A."/>
            <person name="An H.-J."/>
            <person name="Andrews-Pfannkoch C."/>
            <person name="Baldwin D."/>
            <person name="Ballew R.M."/>
            <person name="Basu A."/>
            <person name="Baxendale J."/>
            <person name="Bayraktaroglu L."/>
            <person name="Beasley E.M."/>
            <person name="Beeson K.Y."/>
            <person name="Benos P.V."/>
            <person name="Berman B.P."/>
            <person name="Bhandari D."/>
            <person name="Bolshakov S."/>
            <person name="Borkova D."/>
            <person name="Botchan M.R."/>
            <person name="Bouck J."/>
            <person name="Brokstein P."/>
            <person name="Brottier P."/>
            <person name="Burtis K.C."/>
            <person name="Busam D.A."/>
            <person name="Butler H."/>
            <person name="Cadieu E."/>
            <person name="Center A."/>
            <person name="Chandra I."/>
            <person name="Cherry J.M."/>
            <person name="Cawley S."/>
            <person name="Dahlke C."/>
            <person name="Davenport L.B."/>
            <person name="Davies P."/>
            <person name="de Pablos B."/>
            <person name="Delcher A."/>
            <person name="Deng Z."/>
            <person name="Mays A.D."/>
            <person name="Dew I."/>
            <person name="Dietz S.M."/>
            <person name="Dodson K."/>
            <person name="Doup L.E."/>
            <person name="Downes M."/>
            <person name="Dugan-Rocha S."/>
            <person name="Dunkov B.C."/>
            <person name="Dunn P."/>
            <person name="Durbin K.J."/>
            <person name="Evangelista C.C."/>
            <person name="Ferraz C."/>
            <person name="Ferriera S."/>
            <person name="Fleischmann W."/>
            <person name="Fosler C."/>
            <person name="Gabrielian A.E."/>
            <person name="Garg N.S."/>
            <person name="Gelbart W.M."/>
            <person name="Glasser K."/>
            <person name="Glodek A."/>
            <person name="Gong F."/>
            <person name="Gorrell J.H."/>
            <person name="Gu Z."/>
            <person name="Guan P."/>
            <person name="Harris M."/>
            <person name="Harris N.L."/>
            <person name="Harvey D.A."/>
            <person name="Heiman T.J."/>
            <person name="Hernandez J.R."/>
            <person name="Houck J."/>
            <person name="Hostin D."/>
            <person name="Houston K.A."/>
            <person name="Howland T.J."/>
            <person name="Wei M.-H."/>
            <person name="Ibegwam C."/>
            <person name="Jalali M."/>
            <person name="Kalush F."/>
            <person name="Karpen G.H."/>
            <person name="Ke Z."/>
            <person name="Kennison J.A."/>
            <person name="Ketchum K.A."/>
            <person name="Kimmel B.E."/>
            <person name="Kodira C.D."/>
            <person name="Kraft C.L."/>
            <person name="Kravitz S."/>
            <person name="Kulp D."/>
            <person name="Lai Z."/>
            <person name="Lasko P."/>
            <person name="Lei Y."/>
            <person name="Levitsky A.A."/>
            <person name="Li J.H."/>
            <person name="Li Z."/>
            <person name="Liang Y."/>
            <person name="Lin X."/>
            <person name="Liu X."/>
            <person name="Mattei B."/>
            <person name="McIntosh T.C."/>
            <person name="McLeod M.P."/>
            <person name="McPherson D."/>
            <person name="Merkulov G."/>
            <person name="Milshina N.V."/>
            <person name="Mobarry C."/>
            <person name="Morris J."/>
            <person name="Moshrefi A."/>
            <person name="Mount S.M."/>
            <person name="Moy M."/>
            <person name="Murphy B."/>
            <person name="Murphy L."/>
            <person name="Muzny D.M."/>
            <person name="Nelson D.L."/>
            <person name="Nelson D.R."/>
            <person name="Nelson K.A."/>
            <person name="Nixon K."/>
            <person name="Nusskern D.R."/>
            <person name="Pacleb J.M."/>
            <person name="Palazzolo M."/>
            <person name="Pittman G.S."/>
            <person name="Pan S."/>
            <person name="Pollard J."/>
            <person name="Puri V."/>
            <person name="Reese M.G."/>
            <person name="Reinert K."/>
            <person name="Remington K."/>
            <person name="Saunders R.D.C."/>
            <person name="Scheeler F."/>
            <person name="Shen H."/>
            <person name="Shue B.C."/>
            <person name="Siden-Kiamos I."/>
            <person name="Simpson M."/>
            <person name="Skupski M.P."/>
            <person name="Smith T.J."/>
            <person name="Spier E."/>
            <person name="Spradling A.C."/>
            <person name="Stapleton M."/>
            <person name="Strong R."/>
            <person name="Sun E."/>
            <person name="Svirskas R."/>
            <person name="Tector C."/>
            <person name="Turner R."/>
            <person name="Venter E."/>
            <person name="Wang A.H."/>
            <person name="Wang X."/>
            <person name="Wang Z.-Y."/>
            <person name="Wassarman D.A."/>
            <person name="Weinstock G.M."/>
            <person name="Weissenbach J."/>
            <person name="Williams S.M."/>
            <person name="Woodage T."/>
            <person name="Worley K.C."/>
            <person name="Wu D."/>
            <person name="Yang S."/>
            <person name="Yao Q.A."/>
            <person name="Ye J."/>
            <person name="Yeh R.-F."/>
            <person name="Zaveri J.S."/>
            <person name="Zhan M."/>
            <person name="Zhang G."/>
            <person name="Zhao Q."/>
            <person name="Zheng L."/>
            <person name="Zheng X.H."/>
            <person name="Zhong F.N."/>
            <person name="Zhong W."/>
            <person name="Zhou X."/>
            <person name="Zhu S.C."/>
            <person name="Zhu X."/>
            <person name="Smith H.O."/>
            <person name="Gibbs R.A."/>
            <person name="Myers E.W."/>
            <person name="Rubin G.M."/>
            <person name="Venter J.C."/>
        </authorList>
    </citation>
    <scope>NUCLEOTIDE SEQUENCE [LARGE SCALE GENOMIC DNA]</scope>
    <source>
        <strain>Berkeley</strain>
    </source>
</reference>
<reference key="2">
    <citation type="journal article" date="2002" name="Genome Biol.">
        <title>Annotation of the Drosophila melanogaster euchromatic genome: a systematic review.</title>
        <authorList>
            <person name="Misra S."/>
            <person name="Crosby M.A."/>
            <person name="Mungall C.J."/>
            <person name="Matthews B.B."/>
            <person name="Campbell K.S."/>
            <person name="Hradecky P."/>
            <person name="Huang Y."/>
            <person name="Kaminker J.S."/>
            <person name="Millburn G.H."/>
            <person name="Prochnik S.E."/>
            <person name="Smith C.D."/>
            <person name="Tupy J.L."/>
            <person name="Whitfield E.J."/>
            <person name="Bayraktaroglu L."/>
            <person name="Berman B.P."/>
            <person name="Bettencourt B.R."/>
            <person name="Celniker S.E."/>
            <person name="de Grey A.D.N.J."/>
            <person name="Drysdale R.A."/>
            <person name="Harris N.L."/>
            <person name="Richter J."/>
            <person name="Russo S."/>
            <person name="Schroeder A.J."/>
            <person name="Shu S.Q."/>
            <person name="Stapleton M."/>
            <person name="Yamada C."/>
            <person name="Ashburner M."/>
            <person name="Gelbart W.M."/>
            <person name="Rubin G.M."/>
            <person name="Lewis S.E."/>
        </authorList>
    </citation>
    <scope>GENOME REANNOTATION</scope>
    <source>
        <strain>Berkeley</strain>
    </source>
</reference>
<reference key="3">
    <citation type="journal article" date="2002" name="Genome Biol.">
        <title>A Drosophila full-length cDNA resource.</title>
        <authorList>
            <person name="Stapleton M."/>
            <person name="Carlson J.W."/>
            <person name="Brokstein P."/>
            <person name="Yu C."/>
            <person name="Champe M."/>
            <person name="George R.A."/>
            <person name="Guarin H."/>
            <person name="Kronmiller B."/>
            <person name="Pacleb J.M."/>
            <person name="Park S."/>
            <person name="Wan K.H."/>
            <person name="Rubin G.M."/>
            <person name="Celniker S.E."/>
        </authorList>
    </citation>
    <scope>NUCLEOTIDE SEQUENCE [LARGE SCALE MRNA]</scope>
    <source>
        <strain>Berkeley</strain>
        <tissue>Embryo</tissue>
    </source>
</reference>
<organism>
    <name type="scientific">Drosophila melanogaster</name>
    <name type="common">Fruit fly</name>
    <dbReference type="NCBI Taxonomy" id="7227"/>
    <lineage>
        <taxon>Eukaryota</taxon>
        <taxon>Metazoa</taxon>
        <taxon>Ecdysozoa</taxon>
        <taxon>Arthropoda</taxon>
        <taxon>Hexapoda</taxon>
        <taxon>Insecta</taxon>
        <taxon>Pterygota</taxon>
        <taxon>Neoptera</taxon>
        <taxon>Endopterygota</taxon>
        <taxon>Diptera</taxon>
        <taxon>Brachycera</taxon>
        <taxon>Muscomorpha</taxon>
        <taxon>Ephydroidea</taxon>
        <taxon>Drosophilidae</taxon>
        <taxon>Drosophila</taxon>
        <taxon>Sophophora</taxon>
    </lineage>
</organism>
<comment type="function">
    <text evidence="1">Component of the Mediator complex, a coactivator involved in the regulated transcription of nearly all RNA polymerase II-dependent genes. Mediator functions as a bridge to convey information from gene-specific regulatory proteins to the basal RNA polymerase II transcription machinery. Mediator is recruited to promoters by direct interactions with regulatory proteins and serves as a scaffold for the assembly of a functional preinitiation complex with RNA polymerase II and the general transcription factors (By similarity).</text>
</comment>
<comment type="subunit">
    <text evidence="1">Component of the Mediator complex.</text>
</comment>
<comment type="interaction">
    <interactant intactId="EBI-125442">
        <id>Q9VVL6</id>
    </interactant>
    <interactant intactId="EBI-116042">
        <id>Q8SYU5</id>
        <label>Dmel\CG10086</label>
    </interactant>
    <organismsDiffer>false</organismsDiffer>
    <experiments>3</experiments>
</comment>
<comment type="interaction">
    <interactant intactId="EBI-125442">
        <id>Q9VVL6</id>
    </interactant>
    <interactant intactId="EBI-190674">
        <id>Q960F7</id>
        <label>Gtpbp2</label>
    </interactant>
    <organismsDiffer>false</organismsDiffer>
    <experiments>3</experiments>
</comment>
<comment type="subcellular location">
    <subcellularLocation>
        <location evidence="4">Nucleus</location>
    </subcellularLocation>
</comment>
<comment type="similarity">
    <text evidence="4">Belongs to the Mediator complex subunit 19 family.</text>
</comment>
<protein>
    <recommendedName>
        <fullName>Mediator of RNA polymerase II transcription subunit 19</fullName>
    </recommendedName>
    <alternativeName>
        <fullName>Mediator complex subunit 19</fullName>
    </alternativeName>
</protein>
<sequence length="337" mass="35390">MMSNYGNMMDSPKSSPHGGGRSPVVARQDSSGTLKTTISLGKTPTIIHTGPFYSMKEPPAKAELTGDKDLMTEYGLHHTLTKFKEKKFKESLASFLQNIPGINDLITHPVENSTLRSVIEKPPIGGKELLPLTPVQLAGFRLHPGPLPEQYRTTYVTPARKHKNKHKKQKHKDGVTTGQESTLLDSAGLETYEKKHKKQKRHEDDKERKKRKKEKKRKKKNQSPEPGVGLLPGGASLGGAAGVMGATSLGSLGGGPGGPGLSSLSASMGPGVVGNMNSFSSSMQMQQQQQMPMQQQQMSSGGLLGSVLGTSGGPGGGGGGGGGGGGGVGGSLLMSQF</sequence>